<feature type="chain" id="PRO_0000117202" description="tRNA uridine 5-carboxymethylaminomethyl modification enzyme MnmG">
    <location>
        <begin position="1"/>
        <end position="629"/>
    </location>
</feature>
<feature type="binding site" evidence="1">
    <location>
        <begin position="18"/>
        <end position="23"/>
    </location>
    <ligand>
        <name>FAD</name>
        <dbReference type="ChEBI" id="CHEBI:57692"/>
    </ligand>
</feature>
<feature type="binding site" evidence="1">
    <location>
        <begin position="280"/>
        <end position="294"/>
    </location>
    <ligand>
        <name>NAD(+)</name>
        <dbReference type="ChEBI" id="CHEBI:57540"/>
    </ligand>
</feature>
<gene>
    <name evidence="1" type="primary">mnmG</name>
    <name evidence="1" type="synonym">gidA</name>
    <name type="ordered locus">TM_0263</name>
</gene>
<reference key="1">
    <citation type="journal article" date="1999" name="Nature">
        <title>Evidence for lateral gene transfer between Archaea and Bacteria from genome sequence of Thermotoga maritima.</title>
        <authorList>
            <person name="Nelson K.E."/>
            <person name="Clayton R.A."/>
            <person name="Gill S.R."/>
            <person name="Gwinn M.L."/>
            <person name="Dodson R.J."/>
            <person name="Haft D.H."/>
            <person name="Hickey E.K."/>
            <person name="Peterson J.D."/>
            <person name="Nelson W.C."/>
            <person name="Ketchum K.A."/>
            <person name="McDonald L.A."/>
            <person name="Utterback T.R."/>
            <person name="Malek J.A."/>
            <person name="Linher K.D."/>
            <person name="Garrett M.M."/>
            <person name="Stewart A.M."/>
            <person name="Cotton M.D."/>
            <person name="Pratt M.S."/>
            <person name="Phillips C.A."/>
            <person name="Richardson D.L."/>
            <person name="Heidelberg J.F."/>
            <person name="Sutton G.G."/>
            <person name="Fleischmann R.D."/>
            <person name="Eisen J.A."/>
            <person name="White O."/>
            <person name="Salzberg S.L."/>
            <person name="Smith H.O."/>
            <person name="Venter J.C."/>
            <person name="Fraser C.M."/>
        </authorList>
    </citation>
    <scope>NUCLEOTIDE SEQUENCE [LARGE SCALE GENOMIC DNA]</scope>
    <source>
        <strain>ATCC 43589 / DSM 3109 / JCM 10099 / NBRC 100826 / MSB8</strain>
    </source>
</reference>
<keyword id="KW-0963">Cytoplasm</keyword>
<keyword id="KW-0274">FAD</keyword>
<keyword id="KW-0285">Flavoprotein</keyword>
<keyword id="KW-0520">NAD</keyword>
<keyword id="KW-1185">Reference proteome</keyword>
<keyword id="KW-0819">tRNA processing</keyword>
<accession>Q9WYA1</accession>
<sequence length="629" mass="71040">MIGLRPEDDRVYDVIVVGAGHAGIEAALAAARMGFRVLVLTVNPDTVGWAPCNPAIGGPAKGVVVREIDALGGEMAKTTDETMINVRMLNVSKGPAVRALRAQIDKISYSRTMKRKLETNPNIVLRHGIVERILTEKGRVKGVVDNYGIDYLGKAVIVTTGTFLRGKIFIGRSTFPAGRMGEFPATKLTESLIELGFEVGRFKTGTPARVLKRSINFSVMERQDTSDEPLAFSFFDEPRVLPKDYPCWLTRTNPETHSIIKQYLEFSPLYGTVKLIEGIGPRYCPSIEDKVVKFKDKESHQVFVEPEGRDTEEYYLNGLSTSLPYEAQIKMIRSVKGLENAIVTRPAYAIEYDYIDPRQLYPTLESKLVENLYFAGQVNGTSGYEEAAGQGIIAGINAALKLRGEPPLILKRSEAYIGVLIDDLVTKGVDEPYRLLTSRAEYRLLLRHDNAHLRLAKYGYRVGLIPKWFYEKVLSLERRINEEIERLKKVIVKPSDRVNDLLTSLRTSPLKEPVSFYQLLKRPQLSYSALKFLDPNPIDDPEVVEQVEINVKYEGYIQKMFEEVAVFEKYENYEIPHDLDYDAVPNLSTEARDKLKKIRPRSIGQAMRIPGINPSDISNLIIYLDRKKQ</sequence>
<protein>
    <recommendedName>
        <fullName evidence="1">tRNA uridine 5-carboxymethylaminomethyl modification enzyme MnmG</fullName>
    </recommendedName>
    <alternativeName>
        <fullName evidence="1">Glucose-inhibited division protein A</fullName>
    </alternativeName>
</protein>
<comment type="function">
    <text evidence="1">NAD-binding protein involved in the addition of a carboxymethylaminomethyl (cmnm) group at the wobble position (U34) of certain tRNAs, forming tRNA-cmnm(5)s(2)U34.</text>
</comment>
<comment type="cofactor">
    <cofactor evidence="1">
        <name>FAD</name>
        <dbReference type="ChEBI" id="CHEBI:57692"/>
    </cofactor>
</comment>
<comment type="subunit">
    <text evidence="1">Homodimer. Heterotetramer of two MnmE and two MnmG subunits.</text>
</comment>
<comment type="subcellular location">
    <subcellularLocation>
        <location evidence="1">Cytoplasm</location>
    </subcellularLocation>
</comment>
<comment type="similarity">
    <text evidence="1">Belongs to the MnmG family.</text>
</comment>
<proteinExistence type="inferred from homology"/>
<organism>
    <name type="scientific">Thermotoga maritima (strain ATCC 43589 / DSM 3109 / JCM 10099 / NBRC 100826 / MSB8)</name>
    <dbReference type="NCBI Taxonomy" id="243274"/>
    <lineage>
        <taxon>Bacteria</taxon>
        <taxon>Thermotogati</taxon>
        <taxon>Thermotogota</taxon>
        <taxon>Thermotogae</taxon>
        <taxon>Thermotogales</taxon>
        <taxon>Thermotogaceae</taxon>
        <taxon>Thermotoga</taxon>
    </lineage>
</organism>
<name>MNMG_THEMA</name>
<dbReference type="EMBL" id="AE000512">
    <property type="protein sequence ID" value="AAD35351.1"/>
    <property type="molecule type" value="Genomic_DNA"/>
</dbReference>
<dbReference type="PIR" id="F72400">
    <property type="entry name" value="F72400"/>
</dbReference>
<dbReference type="RefSeq" id="NP_228076.1">
    <property type="nucleotide sequence ID" value="NC_000853.1"/>
</dbReference>
<dbReference type="SMR" id="Q9WYA1"/>
<dbReference type="FunCoup" id="Q9WYA1">
    <property type="interactions" value="396"/>
</dbReference>
<dbReference type="STRING" id="243274.TM_0263"/>
<dbReference type="PaxDb" id="243274-THEMA_03410"/>
<dbReference type="EnsemblBacteria" id="AAD35351">
    <property type="protein sequence ID" value="AAD35351"/>
    <property type="gene ID" value="TM_0263"/>
</dbReference>
<dbReference type="KEGG" id="tma:TM0263"/>
<dbReference type="KEGG" id="tmi:THEMA_03410"/>
<dbReference type="PATRIC" id="fig|243274.18.peg.666"/>
<dbReference type="eggNOG" id="COG0445">
    <property type="taxonomic scope" value="Bacteria"/>
</dbReference>
<dbReference type="InParanoid" id="Q9WYA1"/>
<dbReference type="OrthoDB" id="9815560at2"/>
<dbReference type="Proteomes" id="UP000008183">
    <property type="component" value="Chromosome"/>
</dbReference>
<dbReference type="GO" id="GO:0005829">
    <property type="term" value="C:cytosol"/>
    <property type="evidence" value="ECO:0000318"/>
    <property type="project" value="GO_Central"/>
</dbReference>
<dbReference type="GO" id="GO:0050660">
    <property type="term" value="F:flavin adenine dinucleotide binding"/>
    <property type="evidence" value="ECO:0000318"/>
    <property type="project" value="GO_Central"/>
</dbReference>
<dbReference type="GO" id="GO:0030488">
    <property type="term" value="P:tRNA methylation"/>
    <property type="evidence" value="ECO:0000318"/>
    <property type="project" value="GO_Central"/>
</dbReference>
<dbReference type="GO" id="GO:0002098">
    <property type="term" value="P:tRNA wobble uridine modification"/>
    <property type="evidence" value="ECO:0000318"/>
    <property type="project" value="GO_Central"/>
</dbReference>
<dbReference type="FunFam" id="1.10.10.1800:FF:000001">
    <property type="entry name" value="tRNA uridine 5-carboxymethylaminomethyl modification enzyme MnmG"/>
    <property type="match status" value="1"/>
</dbReference>
<dbReference type="FunFam" id="1.10.150.570:FF:000001">
    <property type="entry name" value="tRNA uridine 5-carboxymethylaminomethyl modification enzyme MnmG"/>
    <property type="match status" value="1"/>
</dbReference>
<dbReference type="FunFam" id="3.50.50.60:FF:000002">
    <property type="entry name" value="tRNA uridine 5-carboxymethylaminomethyl modification enzyme MnmG"/>
    <property type="match status" value="1"/>
</dbReference>
<dbReference type="FunFam" id="3.50.50.60:FF:000119">
    <property type="entry name" value="tRNA uridine 5-carboxymethylaminomethyl modification enzyme MnmG"/>
    <property type="match status" value="1"/>
</dbReference>
<dbReference type="Gene3D" id="3.50.50.60">
    <property type="entry name" value="FAD/NAD(P)-binding domain"/>
    <property type="match status" value="2"/>
</dbReference>
<dbReference type="Gene3D" id="1.10.150.570">
    <property type="entry name" value="GidA associated domain, C-terminal subdomain"/>
    <property type="match status" value="1"/>
</dbReference>
<dbReference type="Gene3D" id="1.10.10.1800">
    <property type="entry name" value="tRNA uridine 5-carboxymethylaminomethyl modification enzyme MnmG/GidA"/>
    <property type="match status" value="1"/>
</dbReference>
<dbReference type="HAMAP" id="MF_00129">
    <property type="entry name" value="MnmG_GidA"/>
    <property type="match status" value="1"/>
</dbReference>
<dbReference type="InterPro" id="IPR036188">
    <property type="entry name" value="FAD/NAD-bd_sf"/>
</dbReference>
<dbReference type="InterPro" id="IPR049312">
    <property type="entry name" value="GIDA_C_N"/>
</dbReference>
<dbReference type="InterPro" id="IPR004416">
    <property type="entry name" value="MnmG"/>
</dbReference>
<dbReference type="InterPro" id="IPR002218">
    <property type="entry name" value="MnmG-rel"/>
</dbReference>
<dbReference type="InterPro" id="IPR020595">
    <property type="entry name" value="MnmG-rel_CS"/>
</dbReference>
<dbReference type="InterPro" id="IPR026904">
    <property type="entry name" value="MnmG_C"/>
</dbReference>
<dbReference type="InterPro" id="IPR047001">
    <property type="entry name" value="MnmG_C_subdom"/>
</dbReference>
<dbReference type="InterPro" id="IPR044920">
    <property type="entry name" value="MnmG_C_subdom_sf"/>
</dbReference>
<dbReference type="InterPro" id="IPR040131">
    <property type="entry name" value="MnmG_N"/>
</dbReference>
<dbReference type="NCBIfam" id="TIGR00136">
    <property type="entry name" value="mnmG_gidA"/>
    <property type="match status" value="1"/>
</dbReference>
<dbReference type="PANTHER" id="PTHR11806">
    <property type="entry name" value="GLUCOSE INHIBITED DIVISION PROTEIN A"/>
    <property type="match status" value="1"/>
</dbReference>
<dbReference type="PANTHER" id="PTHR11806:SF0">
    <property type="entry name" value="PROTEIN MTO1 HOMOLOG, MITOCHONDRIAL"/>
    <property type="match status" value="1"/>
</dbReference>
<dbReference type="Pfam" id="PF01134">
    <property type="entry name" value="GIDA"/>
    <property type="match status" value="1"/>
</dbReference>
<dbReference type="Pfam" id="PF21680">
    <property type="entry name" value="GIDA_C_1st"/>
    <property type="match status" value="1"/>
</dbReference>
<dbReference type="Pfam" id="PF13932">
    <property type="entry name" value="SAM_GIDA_C"/>
    <property type="match status" value="1"/>
</dbReference>
<dbReference type="PRINTS" id="PR00411">
    <property type="entry name" value="PNDRDTASEI"/>
</dbReference>
<dbReference type="SMART" id="SM01228">
    <property type="entry name" value="GIDA_assoc_3"/>
    <property type="match status" value="1"/>
</dbReference>
<dbReference type="SUPFAM" id="SSF51905">
    <property type="entry name" value="FAD/NAD(P)-binding domain"/>
    <property type="match status" value="1"/>
</dbReference>
<dbReference type="PROSITE" id="PS01280">
    <property type="entry name" value="GIDA_1"/>
    <property type="match status" value="1"/>
</dbReference>
<dbReference type="PROSITE" id="PS01281">
    <property type="entry name" value="GIDA_2"/>
    <property type="match status" value="1"/>
</dbReference>
<evidence type="ECO:0000255" key="1">
    <source>
        <dbReference type="HAMAP-Rule" id="MF_00129"/>
    </source>
</evidence>